<proteinExistence type="inferred from homology"/>
<gene>
    <name evidence="1" type="primary">trpC</name>
    <name type="ordered locus">CHAB381_1323</name>
</gene>
<name>TRPC_CAMHC</name>
<feature type="chain" id="PRO_1000018468" description="Indole-3-glycerol phosphate synthase">
    <location>
        <begin position="1"/>
        <end position="261"/>
    </location>
</feature>
<organism>
    <name type="scientific">Campylobacter hominis (strain ATCC BAA-381 / DSM 21671 / CCUG 45161 / LMG 19568 / NCTC 13146 / CH001A)</name>
    <dbReference type="NCBI Taxonomy" id="360107"/>
    <lineage>
        <taxon>Bacteria</taxon>
        <taxon>Pseudomonadati</taxon>
        <taxon>Campylobacterota</taxon>
        <taxon>Epsilonproteobacteria</taxon>
        <taxon>Campylobacterales</taxon>
        <taxon>Campylobacteraceae</taxon>
        <taxon>Campylobacter</taxon>
    </lineage>
</organism>
<dbReference type="EC" id="4.1.1.48" evidence="1"/>
<dbReference type="EMBL" id="CP000776">
    <property type="protein sequence ID" value="ABS51059.1"/>
    <property type="molecule type" value="Genomic_DNA"/>
</dbReference>
<dbReference type="RefSeq" id="WP_012109174.1">
    <property type="nucleotide sequence ID" value="NC_009714.1"/>
</dbReference>
<dbReference type="SMR" id="A7I2Y2"/>
<dbReference type="STRING" id="360107.CHAB381_1323"/>
<dbReference type="KEGG" id="cha:CHAB381_1323"/>
<dbReference type="eggNOG" id="COG0134">
    <property type="taxonomic scope" value="Bacteria"/>
</dbReference>
<dbReference type="HOGENOM" id="CLU_034247_2_0_7"/>
<dbReference type="OrthoDB" id="9804217at2"/>
<dbReference type="UniPathway" id="UPA00035">
    <property type="reaction ID" value="UER00043"/>
</dbReference>
<dbReference type="Proteomes" id="UP000002407">
    <property type="component" value="Chromosome"/>
</dbReference>
<dbReference type="GO" id="GO:0004425">
    <property type="term" value="F:indole-3-glycerol-phosphate synthase activity"/>
    <property type="evidence" value="ECO:0007669"/>
    <property type="project" value="UniProtKB-UniRule"/>
</dbReference>
<dbReference type="GO" id="GO:0004640">
    <property type="term" value="F:phosphoribosylanthranilate isomerase activity"/>
    <property type="evidence" value="ECO:0007669"/>
    <property type="project" value="TreeGrafter"/>
</dbReference>
<dbReference type="GO" id="GO:0000162">
    <property type="term" value="P:L-tryptophan biosynthetic process"/>
    <property type="evidence" value="ECO:0007669"/>
    <property type="project" value="UniProtKB-UniRule"/>
</dbReference>
<dbReference type="CDD" id="cd00331">
    <property type="entry name" value="IGPS"/>
    <property type="match status" value="1"/>
</dbReference>
<dbReference type="FunFam" id="3.20.20.70:FF:000024">
    <property type="entry name" value="Indole-3-glycerol phosphate synthase"/>
    <property type="match status" value="1"/>
</dbReference>
<dbReference type="Gene3D" id="3.20.20.70">
    <property type="entry name" value="Aldolase class I"/>
    <property type="match status" value="1"/>
</dbReference>
<dbReference type="HAMAP" id="MF_00134_B">
    <property type="entry name" value="IGPS_B"/>
    <property type="match status" value="1"/>
</dbReference>
<dbReference type="InterPro" id="IPR013785">
    <property type="entry name" value="Aldolase_TIM"/>
</dbReference>
<dbReference type="InterPro" id="IPR045186">
    <property type="entry name" value="Indole-3-glycerol_P_synth"/>
</dbReference>
<dbReference type="InterPro" id="IPR013798">
    <property type="entry name" value="Indole-3-glycerol_P_synth_dom"/>
</dbReference>
<dbReference type="InterPro" id="IPR001468">
    <property type="entry name" value="Indole-3-GlycerolPSynthase_CS"/>
</dbReference>
<dbReference type="InterPro" id="IPR011060">
    <property type="entry name" value="RibuloseP-bd_barrel"/>
</dbReference>
<dbReference type="NCBIfam" id="NF001377">
    <property type="entry name" value="PRK00278.2-4"/>
    <property type="match status" value="1"/>
</dbReference>
<dbReference type="NCBIfam" id="NF001378">
    <property type="entry name" value="PRK00278.2-5"/>
    <property type="match status" value="1"/>
</dbReference>
<dbReference type="PANTHER" id="PTHR22854:SF2">
    <property type="entry name" value="INDOLE-3-GLYCEROL-PHOSPHATE SYNTHASE"/>
    <property type="match status" value="1"/>
</dbReference>
<dbReference type="PANTHER" id="PTHR22854">
    <property type="entry name" value="TRYPTOPHAN BIOSYNTHESIS PROTEIN"/>
    <property type="match status" value="1"/>
</dbReference>
<dbReference type="Pfam" id="PF00218">
    <property type="entry name" value="IGPS"/>
    <property type="match status" value="1"/>
</dbReference>
<dbReference type="SUPFAM" id="SSF51366">
    <property type="entry name" value="Ribulose-phoshate binding barrel"/>
    <property type="match status" value="1"/>
</dbReference>
<dbReference type="PROSITE" id="PS00614">
    <property type="entry name" value="IGPS"/>
    <property type="match status" value="1"/>
</dbReference>
<evidence type="ECO:0000255" key="1">
    <source>
        <dbReference type="HAMAP-Rule" id="MF_00134"/>
    </source>
</evidence>
<comment type="catalytic activity">
    <reaction evidence="1">
        <text>1-(2-carboxyphenylamino)-1-deoxy-D-ribulose 5-phosphate + H(+) = (1S,2R)-1-C-(indol-3-yl)glycerol 3-phosphate + CO2 + H2O</text>
        <dbReference type="Rhea" id="RHEA:23476"/>
        <dbReference type="ChEBI" id="CHEBI:15377"/>
        <dbReference type="ChEBI" id="CHEBI:15378"/>
        <dbReference type="ChEBI" id="CHEBI:16526"/>
        <dbReference type="ChEBI" id="CHEBI:58613"/>
        <dbReference type="ChEBI" id="CHEBI:58866"/>
        <dbReference type="EC" id="4.1.1.48"/>
    </reaction>
</comment>
<comment type="pathway">
    <text evidence="1">Amino-acid biosynthesis; L-tryptophan biosynthesis; L-tryptophan from chorismate: step 4/5.</text>
</comment>
<comment type="similarity">
    <text evidence="1">Belongs to the TrpC family.</text>
</comment>
<protein>
    <recommendedName>
        <fullName evidence="1">Indole-3-glycerol phosphate synthase</fullName>
        <shortName evidence="1">IGPS</shortName>
        <ecNumber evidence="1">4.1.1.48</ecNumber>
    </recommendedName>
</protein>
<reference key="1">
    <citation type="submission" date="2007-07" db="EMBL/GenBank/DDBJ databases">
        <title>Complete genome sequence of Campylobacter hominis ATCC BAA-381, a commensal isolated from the human gastrointestinal tract.</title>
        <authorList>
            <person name="Fouts D.E."/>
            <person name="Mongodin E.F."/>
            <person name="Puiu D."/>
            <person name="Sebastian Y."/>
            <person name="Miller W.G."/>
            <person name="Mandrell R.E."/>
            <person name="Nelson K.E."/>
        </authorList>
    </citation>
    <scope>NUCLEOTIDE SEQUENCE [LARGE SCALE GENOMIC DNA]</scope>
    <source>
        <strain>ATCC BAA-381 / DSM 21671 / CCUG 45161 / LMG 19568 / NCTC 13146 / CH001A</strain>
    </source>
</reference>
<keyword id="KW-0028">Amino-acid biosynthesis</keyword>
<keyword id="KW-0057">Aromatic amino acid biosynthesis</keyword>
<keyword id="KW-0210">Decarboxylase</keyword>
<keyword id="KW-0456">Lyase</keyword>
<keyword id="KW-1185">Reference proteome</keyword>
<keyword id="KW-0822">Tryptophan biosynthesis</keyword>
<sequence length="261" mass="29701">MILDEILKKTREDLKRRKKMLSFELLGRSLSANPYMPRDVIKALKSTPNEPFKLICEIKKASPSKGVIREYFKPVEIAREYEKAGADAFSVLTEPHFFKGDLEFISQIRRYTKMPILRKDFIIDEYQILEALVYGADFVLLIAKALSLKELKKLLEFTHHIGLEALVEVHDKKDLLNATLSGANIIGINHRDLNDFSLHMNLAEELVPLIPNGKIIVAESGLNSREQLVNLNKVGVDAFLIGEHFMRQNDICAAVREMKGV</sequence>
<accession>A7I2Y2</accession>